<proteinExistence type="evidence at protein level"/>
<name>K1C10_HUMAN</name>
<feature type="chain" id="PRO_0000063642" description="Keratin, type I cytoskeletal 10">
    <location>
        <begin position="1"/>
        <end position="584"/>
    </location>
</feature>
<feature type="domain" description="IF rod" evidence="2">
    <location>
        <begin position="146"/>
        <end position="460"/>
    </location>
</feature>
<feature type="region of interest" description="Head">
    <location>
        <begin position="1"/>
        <end position="145"/>
    </location>
</feature>
<feature type="region of interest" description="Disordered" evidence="3">
    <location>
        <begin position="1"/>
        <end position="24"/>
    </location>
</feature>
<feature type="region of interest" description="Coil 1A">
    <location>
        <begin position="146"/>
        <end position="181"/>
    </location>
</feature>
<feature type="region of interest" description="Linker 1">
    <location>
        <begin position="182"/>
        <end position="202"/>
    </location>
</feature>
<feature type="region of interest" description="Coil 1B">
    <location>
        <begin position="203"/>
        <end position="294"/>
    </location>
</feature>
<feature type="region of interest" description="Linker 12">
    <location>
        <begin position="295"/>
        <end position="317"/>
    </location>
</feature>
<feature type="region of interest" description="Coil 2">
    <location>
        <begin position="318"/>
        <end position="456"/>
    </location>
</feature>
<feature type="region of interest" description="Disordered" evidence="3">
    <location>
        <begin position="453"/>
        <end position="584"/>
    </location>
</feature>
<feature type="region of interest" description="Tail">
    <location>
        <begin position="457"/>
        <end position="584"/>
    </location>
</feature>
<feature type="compositionally biased region" description="Low complexity" evidence="3">
    <location>
        <begin position="1"/>
        <end position="15"/>
    </location>
</feature>
<feature type="compositionally biased region" description="Gly residues" evidence="3">
    <location>
        <begin position="457"/>
        <end position="563"/>
    </location>
</feature>
<feature type="compositionally biased region" description="Low complexity" evidence="3">
    <location>
        <begin position="564"/>
        <end position="584"/>
    </location>
</feature>
<feature type="modified residue" description="Phosphoserine" evidence="42">
    <location>
        <position position="14"/>
    </location>
</feature>
<feature type="modified residue" description="Phosphoserine" evidence="41 42">
    <location>
        <position position="16"/>
    </location>
</feature>
<feature type="modified residue" description="Phosphoserine" evidence="41 42">
    <location>
        <position position="42"/>
    </location>
</feature>
<feature type="modified residue" description="Phosphoserine" evidence="42">
    <location>
        <position position="53"/>
    </location>
</feature>
<feature type="modified residue" description="Phosphoserine" evidence="42">
    <location>
        <position position="56"/>
    </location>
</feature>
<feature type="modified residue" description="Phosphoserine" evidence="42">
    <location>
        <position position="170"/>
    </location>
</feature>
<feature type="disulfide bond" description="Interchain" evidence="37 40">
    <location>
        <position position="401"/>
    </location>
</feature>
<feature type="sequence variant" id="VAR_058202" description="In dbSNP:rs4261597." evidence="9 20">
    <original>I</original>
    <variation>S</variation>
    <location>
        <position position="101"/>
    </location>
</feature>
<feature type="sequence variant" id="VAR_010505" description="In dbSNP:rs77919366." evidence="16 30">
    <original>G</original>
    <variation>S</variation>
    <location>
        <position position="126"/>
    </location>
</feature>
<feature type="sequence variant" id="VAR_010506" description="In EHK2A; dbSNP:rs58901407." evidence="16 30">
    <original>M</original>
    <variation>R</variation>
    <location>
        <position position="150"/>
    </location>
</feature>
<feature type="sequence variant" id="VAR_010507" description="In EHK2A; also found in a patient with hyperkeratotic epidermal nevi due to genetic mosaicism; dbSNP:rs58901407." evidence="16 31">
    <original>M</original>
    <variation>T</variation>
    <location>
        <position position="150"/>
    </location>
</feature>
<feature type="sequence variant" id="VAR_003826" description="In EHK2A; dbSNP:rs57784225." evidence="28">
    <original>N</original>
    <variation>H</variation>
    <location>
        <position position="154"/>
    </location>
</feature>
<feature type="sequence variant" id="VAR_003828" description="In EHK2A; dbSNP:rs58852768." evidence="16 28 29 30 34">
    <original>R</original>
    <variation>C</variation>
    <location>
        <position position="156"/>
    </location>
</feature>
<feature type="sequence variant" id="VAR_003827" description="In EHK2A; dbSNP:rs58075662." evidence="6 7 16 26 28">
    <original>R</original>
    <variation>H</variation>
    <location>
        <position position="156"/>
    </location>
</feature>
<feature type="sequence variant" id="VAR_088516" description="In EHK2A; dbSNP:rs58075662." evidence="29">
    <original>R</original>
    <variation>L</variation>
    <location>
        <position position="156"/>
    </location>
</feature>
<feature type="sequence variant" id="VAR_003829" description="In EHK2A; dbSNP:rs58075662." evidence="27">
    <original>R</original>
    <variation>P</variation>
    <location>
        <position position="156"/>
    </location>
</feature>
<feature type="sequence variant" id="VAR_003830" description="In EHK2A; dbSNP:rs58852768." evidence="6 7 27 28">
    <original>R</original>
    <variation>S</variation>
    <location>
        <position position="156"/>
    </location>
</feature>
<feature type="sequence variant" id="VAR_003831" description="In EHK2A; dbSNP:rs58414354." evidence="28">
    <original>Y</original>
    <variation>D</variation>
    <location>
        <position position="160"/>
    </location>
</feature>
<feature type="sequence variant" id="VAR_010508" description="In EHK2A." evidence="26">
    <original>Y</original>
    <variation>N</variation>
    <location>
        <position position="160"/>
    </location>
</feature>
<feature type="sequence variant" id="VAR_010509" description="In EHK2A; dbSNP:rs58735429." evidence="4">
    <original>Y</original>
    <variation>S</variation>
    <location>
        <position position="160"/>
    </location>
</feature>
<feature type="sequence variant" id="VAR_003832" description="In EHK2A; dbSNP:rs60118264." evidence="6">
    <original>L</original>
    <variation>S</variation>
    <location>
        <position position="161"/>
    </location>
</feature>
<feature type="sequence variant" id="VAR_033145" description="In AEI1; requires 2 nucleotide substitutions; dbSNP:rs59075499." evidence="32">
    <original>R</original>
    <variation>E</variation>
    <location>
        <position position="422"/>
    </location>
</feature>
<feature type="sequence variant" id="VAR_089165" description="In EHK2B." evidence="11">
    <location>
        <begin position="427"/>
        <end position="584"/>
    </location>
</feature>
<feature type="sequence variant" id="VAR_088517" description="In EHK2A." evidence="10">
    <location>
        <begin position="434"/>
        <end position="584"/>
    </location>
</feature>
<feature type="sequence variant" id="VAR_087806" description="In IHL; uncertain significance." evidence="23">
    <original>L</original>
    <variation>P</variation>
    <location>
        <position position="435"/>
    </location>
</feature>
<feature type="sequence variant" id="VAR_010510" description="In EHK2A; dbSNP:rs61434181." evidence="30">
    <original>K</original>
    <variation>E</variation>
    <location>
        <position position="439"/>
    </location>
</feature>
<feature type="sequence variant" id="VAR_003833" description="In EHK2A; dbSNP:rs58026994." evidence="28">
    <original>L</original>
    <variation>Q</variation>
    <location>
        <position position="442"/>
    </location>
</feature>
<feature type="sequence variant" id="VAR_010511" description="In AEI1; dbSNP:rs62651994." evidence="33">
    <original>I</original>
    <variation>T</variation>
    <location>
        <position position="446"/>
    </location>
</feature>
<feature type="sequence variant" id="VAR_071985" description="In EHK2A; dbSNP:rs267607383." evidence="16">
    <original>Y</original>
    <variation>C</variation>
    <location>
        <position position="449"/>
    </location>
</feature>
<feature type="sequence variant" id="VAR_060723" description="In dbSNP:rs17855579." evidence="9 19 20 21">
    <original>H</original>
    <variation>Y</variation>
    <location>
        <position position="487"/>
    </location>
</feature>
<feature type="sequence conflict" description="In Ref. 1; AAA60544." evidence="36" ref="1">
    <original>KHY</original>
    <variation>SKQF</variation>
    <location>
        <begin position="9"/>
        <end position="11"/>
    </location>
</feature>
<feature type="sequence conflict" description="In Ref. 1; AAA60544." evidence="36" ref="1">
    <location>
        <begin position="24"/>
        <end position="31"/>
    </location>
</feature>
<feature type="sequence conflict" description="In Ref. 2; CAA32649." evidence="36" ref="2">
    <original>R</original>
    <variation>H</variation>
    <location>
        <position position="86"/>
    </location>
</feature>
<feature type="sequence conflict" description="In Ref. 2; CAA32649." evidence="36" ref="2">
    <original>S</original>
    <variation>N</variation>
    <location>
        <position position="106"/>
    </location>
</feature>
<feature type="sequence conflict" description="In Ref. 1; AAA60544." evidence="36" ref="1">
    <original>WYEK</original>
    <variation>RYDQ</variation>
    <location>
        <begin position="181"/>
        <end position="184"/>
    </location>
</feature>
<feature type="sequence conflict" description="In Ref. 1; AAA60544." evidence="36" ref="1">
    <original>H</original>
    <variation>R</variation>
    <location>
        <position position="189"/>
    </location>
</feature>
<feature type="sequence conflict" description="In Ref. 8; AAA59199." evidence="36" ref="8">
    <original>S</original>
    <variation>G</variation>
    <location>
        <position position="197"/>
    </location>
</feature>
<feature type="sequence conflict" description="In Ref. 1; AAA60544." evidence="36" ref="1">
    <original>K</original>
    <variation>Q</variation>
    <location>
        <position position="266"/>
    </location>
</feature>
<feature type="sequence conflict" description="In Ref. 5; AAA59468." evidence="36" ref="5">
    <original>EL</original>
    <variation>YV</variation>
    <location>
        <begin position="279"/>
        <end position="280"/>
    </location>
</feature>
<feature type="sequence conflict" description="In Ref. 1; AAA60544." evidence="36" ref="1">
    <original>H</original>
    <variation>R</variation>
    <location>
        <position position="287"/>
    </location>
</feature>
<feature type="sequence conflict" description="In Ref. 1; AAA60544." evidence="36" ref="1">
    <original>D</original>
    <variation>H</variation>
    <location>
        <position position="293"/>
    </location>
</feature>
<feature type="sequence conflict" description="In Ref. 5; AAA59468." evidence="36" ref="5">
    <original>V</original>
    <variation>I</variation>
    <location>
        <position position="312"/>
    </location>
</feature>
<feature type="sequence conflict" description="In Ref. 1; AAA60544." evidence="36" ref="1">
    <original>S</original>
    <variation>N</variation>
    <location>
        <position position="323"/>
    </location>
</feature>
<feature type="sequence conflict" description="In Ref. 5; AAA59468." evidence="36" ref="5">
    <original>F</original>
    <variation>V</variation>
    <location>
        <position position="340"/>
    </location>
</feature>
<feature type="sequence conflict" description="In Ref. 5; AAA59468." evidence="36" ref="5">
    <original>A</original>
    <variation>R</variation>
    <location>
        <position position="374"/>
    </location>
</feature>
<feature type="sequence conflict" description="In Ref. 2; CAA32649." evidence="36" ref="2">
    <original>Q</original>
    <variation>H</variation>
    <location>
        <position position="408"/>
    </location>
</feature>
<feature type="sequence conflict" description="In Ref. 1; AAA60544." evidence="36" ref="1">
    <original>Q</original>
    <variation>E</variation>
    <location>
        <position position="420"/>
    </location>
</feature>
<feature type="sequence conflict" description="In Ref. 1; AAA60544." evidence="36" ref="1">
    <original>L</original>
    <variation>T</variation>
    <location>
        <position position="436"/>
    </location>
</feature>
<feature type="sequence conflict" description="In Ref. 8; AAA59199." evidence="36" ref="8">
    <original>S</original>
    <variation>G</variation>
    <location>
        <position position="451"/>
    </location>
</feature>
<feature type="sequence conflict" description="In Ref. 5; AAA59468." evidence="36" ref="5">
    <original>GG</original>
    <variation>RS</variation>
    <location>
        <begin position="460"/>
        <end position="461"/>
    </location>
</feature>
<feature type="sequence conflict" description="In Ref. 5; AAA59468." evidence="36" ref="5">
    <original>S</original>
    <variation>T</variation>
    <location>
        <position position="477"/>
    </location>
</feature>
<feature type="sequence conflict" description="In Ref. 5; AAA59468." evidence="36" ref="5">
    <original>S</original>
    <variation>T</variation>
    <location>
        <position position="482"/>
    </location>
</feature>
<feature type="sequence conflict" description="In Ref. 8; AAA59199." evidence="36" ref="8">
    <location>
        <begin position="487"/>
        <end position="490"/>
    </location>
</feature>
<feature type="sequence conflict" description="In Ref. 1; AAA60544." evidence="36" ref="1">
    <location>
        <begin position="491"/>
        <end position="516"/>
    </location>
</feature>
<feature type="sequence conflict" description="In Ref. 5; AAA59468." evidence="36" ref="5">
    <original>S</original>
    <variation>T</variation>
    <location>
        <position position="503"/>
    </location>
</feature>
<feature type="sequence conflict" description="In Ref. 5; AAA59468." evidence="36" ref="5">
    <original>S</original>
    <variation>T</variation>
    <location>
        <position position="508"/>
    </location>
</feature>
<feature type="sequence conflict" description="In Ref. 5; AAA59468." evidence="36" ref="5">
    <original>YGGGSSS</original>
    <variation>LRGELH</variation>
    <location>
        <begin position="513"/>
        <end position="519"/>
    </location>
</feature>
<feature type="sequence conflict" description="In Ref. 5; AAA59468." evidence="36" ref="5">
    <original>GGSSS</original>
    <variation>AHST</variation>
    <location>
        <begin position="523"/>
        <end position="527"/>
    </location>
</feature>
<feature type="sequence conflict" description="In Ref. 2; CAA32649." evidence="36" ref="2">
    <original>G</original>
    <variation>GGSSSGGHGG</variation>
    <location>
        <position position="524"/>
    </location>
</feature>
<feature type="sequence conflict" description="In Ref. 5; AAA59468." evidence="36" ref="5">
    <original>S</original>
    <variation>N</variation>
    <location>
        <position position="534"/>
    </location>
</feature>
<feature type="sequence conflict" description="In Ref. 1; AAA60544." evidence="36" ref="1">
    <original>S</original>
    <variation>F</variation>
    <location>
        <position position="535"/>
    </location>
</feature>
<feature type="sequence conflict" description="In Ref. 5; AAA59468." evidence="36" ref="5">
    <original>YGGGS</original>
    <variation>LRGRH</variation>
    <location>
        <begin position="542"/>
        <end position="546"/>
    </location>
</feature>
<feature type="sequence conflict" description="In Ref. 1; AAA60544." evidence="36" ref="1">
    <original>G</original>
    <variation>GGYGGGSSSGG</variation>
    <location>
        <position position="565"/>
    </location>
</feature>
<feature type="helix" evidence="45">
    <location>
        <begin position="195"/>
        <end position="295"/>
    </location>
</feature>
<feature type="helix" evidence="46">
    <location>
        <begin position="350"/>
        <end position="454"/>
    </location>
</feature>
<feature type="strand" evidence="43">
    <location>
        <begin position="479"/>
        <end position="481"/>
    </location>
</feature>
<feature type="strand" evidence="43">
    <location>
        <begin position="483"/>
        <end position="486"/>
    </location>
</feature>
<feature type="strand" evidence="44">
    <location>
        <begin position="500"/>
        <end position="508"/>
    </location>
</feature>
<gene>
    <name type="primary">KRT10</name>
    <name type="synonym">KPP</name>
</gene>
<organism>
    <name type="scientific">Homo sapiens</name>
    <name type="common">Human</name>
    <dbReference type="NCBI Taxonomy" id="9606"/>
    <lineage>
        <taxon>Eukaryota</taxon>
        <taxon>Metazoa</taxon>
        <taxon>Chordata</taxon>
        <taxon>Craniata</taxon>
        <taxon>Vertebrata</taxon>
        <taxon>Euteleostomi</taxon>
        <taxon>Mammalia</taxon>
        <taxon>Eutheria</taxon>
        <taxon>Euarchontoglires</taxon>
        <taxon>Primates</taxon>
        <taxon>Haplorrhini</taxon>
        <taxon>Catarrhini</taxon>
        <taxon>Hominidae</taxon>
        <taxon>Homo</taxon>
    </lineage>
</organism>
<sequence>MSVRYSSSKHYSSSRSGGGGGGGGCGGGGGVSSLRISSSKGSLGGGFSSGGFSGGSFSRGSSGGGCFGGSSGGYGGLGGFGGGSFRGSYGSSSFGGSYGGIFGGGSFGGGSFGGGSFGGGGFGGGGFGGGFGGGFGGDGGLLSGNEKVTMQNLNDRLASYLDKVRALEESNYELEGKIKEWYEKHGNSHQGEPRDYSKYYKTIDDLKNQILNLTTDNANILLQIDNARLAADDFRLKYENEVALRQSVEADINGLRRVLDELTLTKADLEMQIESLTEELAYLKKNHEEEMKDLRNVSTGDVNVEMNAAPGVDLTQLLNNMRSQYEQLAEQNRKDAEAWFNEKSKELTTEIDNNIEQISSYKSEITELRRNVQALEIELQSQLALKQSLEASLAETEGRYCVQLSQIQAQISALEEQLQQIRAETECQNTEYQQLLDIKIRLENEIQTYRSLLEGEGSSGGGGRGGGSFGGGYGGGSSGGGSSGGGHGGGHGGSSGGGYGGGSSGGGSSGGGYGGGSSSGGHGGSSSGGYGGGSSGGGGGGYGGGSSGGGSSSGGGYGGGSSSGGHKSSSSGSVGESSSKGPRY</sequence>
<comment type="function">
    <text evidence="1">Plays a role in the establishment of the epidermal barrier on plantar skin (By similarity). Involved in the maintenance of cell layer development and keratin filament bundles in suprabasal cells of the epithelium (By similarity).</text>
</comment>
<comment type="function">
    <text evidence="8">(Microbial infection) Acts as a mediator of S.aureus adherence to desquamated nasal epithelial cells via clfB, and hence may play a role in nasal colonization.</text>
</comment>
<comment type="function">
    <text evidence="13">(Microbial infection) Binds S.pneumoniae PsrP, mediating adherence of the bacteria to lung cell lines. Reduction of levels of KRT10 keratin decrease adherence, overexpression increases adherence. Neither protein has to be glycosylated for the interaction to occur.</text>
</comment>
<comment type="subunit">
    <text evidence="22 24 35">Heterotetramer of two type I and two type II keratins. Heterodimer with KRT1 (PubMed:24940650, PubMed:27595935). Two heterodimers of KRT1 and KRT10 form a heterotetramer (PubMed:27595935). The KRT10 subunit in the heterotetramer is probably disulfide-linked (PubMed:27595935). Interacts with PLEC isoform 1C, when in a heterodimer with KRT1 (PubMed:24940650).</text>
</comment>
<comment type="subunit">
    <text evidence="5 8 17">(Microbial infection) Interacts (via C-terminal tail domain) with the S.aureus clumping factor, clfB; this interaction probably mediates S.aureus attachment to the keratinized squamous epithelial cells from the nasal cavity.</text>
</comment>
<comment type="subunit">
    <text evidence="13 18">(Microbial infection) Interacts (via the C-terminal tail domain) with S.pneumoniae serine-rich repeat protein PsrP; this interaction probably mediates S.pneumoniae adherence to lung tissue and subsequent pathogenesis. Neither protein has to be glycosylated for the interaction to occur.</text>
</comment>
<comment type="interaction">
    <interactant intactId="EBI-465144">
        <id>P13645</id>
    </interactant>
    <interactant intactId="EBI-298429">
        <id>P04264</id>
        <label>KRT1</label>
    </interactant>
    <organismsDiffer>false</organismsDiffer>
    <experiments>5</experiments>
</comment>
<comment type="subcellular location">
    <subcellularLocation>
        <location evidence="5">Secreted</location>
        <location evidence="5">Extracellular space</location>
    </subcellularLocation>
    <subcellularLocation>
        <location evidence="13">Cell surface</location>
    </subcellularLocation>
    <subcellularLocation>
        <location evidence="25">Cytoplasm</location>
    </subcellularLocation>
</comment>
<comment type="tissue specificity">
    <text evidence="5 13">Seen in all suprabasal cell layers including stratum corneum. Expressed on the surface of lung cell lines (PubMed:19627498). Localized on the surface of desquamated nasal epithelial cells (at protein level) (PubMed:12427098).</text>
</comment>
<comment type="induction">
    <text evidence="25">Repressed in keratinocytes by all-trans retinoic acid (ATRA), via reduction of mRNA stability.</text>
</comment>
<comment type="polymorphism">
    <text>A number of alleles are known that mainly differ in the Gly-rich region (positions 490-560).</text>
</comment>
<comment type="disease" evidence="4 6 7 16 26 27 28 29 30 31 34">
    <disease id="DI-06671">
        <name>Epidermolytic hyperkeratosis 2A</name>
        <acronym>EHK2A</acronym>
        <description>An autosomal dominant form of epidermolytic hyperkeratosis, a skin disorder characterized by widespread blistering and an ichthyotic erythroderma at birth that persist into adulthood. Histologically there is a diffuse epidermolytic degeneration in the lower spinous layer of the epidermis. Within a few weeks from birth, erythroderma and blister formation diminish and hyperkeratoses develop. EHK2 inheritance is autosomal dominant or autosomal recessive.</description>
        <dbReference type="MIM" id="620150"/>
    </disease>
    <text>The disease is caused by variants affecting the gene represented in this entry.</text>
</comment>
<comment type="disease" evidence="10 11 12 14">
    <disease id="DI-06837">
        <name>Epidermolytic hyperkeratosis 2B, autosomal recessive</name>
        <acronym>EHK2B</acronym>
        <description>An autosomal recessive form of epidermolytic hyperkeratosis, a skin disorder characterized by widespread blistering and an ichthyotic erythroderma at birth that persist into adulthood. Histologically there is a diffuse epidermolytic degeneration in the lower spinous layer of the epidermis. Within a few weeks from birth, erythroderma and blister formation diminish and hyperkeratoses develop.</description>
        <dbReference type="MIM" id="620707"/>
    </disease>
    <text>The disease is caused by variants affecting the gene represented in this entry.</text>
</comment>
<comment type="disease" evidence="32 33">
    <disease id="DI-00580">
        <name>Ichthyosis, annular epidermolytic, 1</name>
        <acronym>AEI1</acronym>
        <description>A form of annular epidermolytic ichthyosis, an autosomal dominant skin disorder characterized by polycyclic, migratory erythematous and scaly plaques. AEI1 is characterized by the development of widespread erythematous blistering in the neonatal period or early childhood that subsides over time.</description>
        <dbReference type="MIM" id="607602"/>
    </disease>
    <text>The disease is caused by variants affecting the gene represented in this entry.</text>
</comment>
<comment type="disease" evidence="15">
    <disease id="DI-02981">
        <name>Ichthyosis with confetti</name>
        <acronym>IWC</acronym>
        <description>An autosomal dominant, rare skin condition characterized by slowly enlarging islands of normal skin surrounded by erythematous ichthyotic patches in a reticulated pattern. The condition starts in infancy as a lamellar ichthyosis, with small islands of normal skin resembling confetti appearing in late childhood and at puberty. Histopathologic findings include band-like parakeratosis, psoriasiform acanthosis, and vacuolization of keratinocytes with binucleated cells in the upper epidermis, sometimes associated with amyloid deposition in the dermis. Ultrastructural abnormalities include perinuclear shells formed from a network of fine filaments in the upper epidermis.</description>
        <dbReference type="MIM" id="609165"/>
    </disease>
    <text>The disease is caused by variants affecting the gene represented in this entry.</text>
</comment>
<comment type="disease" evidence="23">
    <disease id="DI-06555">
        <name>Ichthyosis histrix, Lambert type</name>
        <acronym>IHL</acronym>
        <description>An autosomal dominant form of ichthyosis, a disorder of keratinization with abnormal differentiation and desquamation of the epidermis, resulting in abnormal skin scaling. IHL is characterized by normal skin at birth that develops striking spiny hyperkeratotic lesions within a few months. There is sparing of the face, palms, and soles, and affected individuals do not experience blistering.</description>
        <dbReference type="MIM" id="146600"/>
    </disease>
    <text>The disease may be caused by variants affecting the gene represented in this entry.</text>
</comment>
<comment type="miscellaneous">
    <text>There are two types of cytoskeletal and microfibrillar keratin: I (acidic; 40-55 kDa) and II (neutral to basic; 56-70 kDa).</text>
</comment>
<comment type="similarity">
    <text evidence="2">Belongs to the intermediate filament family.</text>
</comment>
<comment type="sequence caution" evidence="36">
    <conflict type="erroneous initiation">
        <sequence resource="EMBL-CDS" id="AAA59468"/>
    </conflict>
    <text>Truncated N-terminus.</text>
</comment>
<comment type="online information" name="Wikipedia">
    <link uri="https://en.wikipedia.org/wiki/Keratin_10"/>
    <text>Keratin-10 entry</text>
</comment>
<protein>
    <recommendedName>
        <fullName>Keratin, type I cytoskeletal 10</fullName>
    </recommendedName>
    <alternativeName>
        <fullName>Cytokeratin-10</fullName>
        <shortName>CK-10</shortName>
    </alternativeName>
    <alternativeName>
        <fullName>Keratin-10</fullName>
        <shortName>K10</shortName>
    </alternativeName>
</protein>
<evidence type="ECO:0000250" key="1">
    <source>
        <dbReference type="UniProtKB" id="P02535"/>
    </source>
</evidence>
<evidence type="ECO:0000255" key="2">
    <source>
        <dbReference type="PROSITE-ProRule" id="PRU01188"/>
    </source>
</evidence>
<evidence type="ECO:0000256" key="3">
    <source>
        <dbReference type="SAM" id="MobiDB-lite"/>
    </source>
</evidence>
<evidence type="ECO:0000269" key="4">
    <source>
    </source>
</evidence>
<evidence type="ECO:0000269" key="5">
    <source>
    </source>
</evidence>
<evidence type="ECO:0000269" key="6">
    <source>
    </source>
</evidence>
<evidence type="ECO:0000269" key="7">
    <source>
    </source>
</evidence>
<evidence type="ECO:0000269" key="8">
    <source>
    </source>
</evidence>
<evidence type="ECO:0000269" key="9">
    <source>
    </source>
</evidence>
<evidence type="ECO:0000269" key="10">
    <source>
    </source>
</evidence>
<evidence type="ECO:0000269" key="11">
    <source>
    </source>
</evidence>
<evidence type="ECO:0000269" key="12">
    <source>
    </source>
</evidence>
<evidence type="ECO:0000269" key="13">
    <source>
    </source>
</evidence>
<evidence type="ECO:0000269" key="14">
    <source>
    </source>
</evidence>
<evidence type="ECO:0000269" key="15">
    <source>
    </source>
</evidence>
<evidence type="ECO:0000269" key="16">
    <source>
    </source>
</evidence>
<evidence type="ECO:0000269" key="17">
    <source>
    </source>
</evidence>
<evidence type="ECO:0000269" key="18">
    <source>
    </source>
</evidence>
<evidence type="ECO:0000269" key="19">
    <source>
    </source>
</evidence>
<evidence type="ECO:0000269" key="20">
    <source>
    </source>
</evidence>
<evidence type="ECO:0000269" key="21">
    <source>
    </source>
</evidence>
<evidence type="ECO:0000269" key="22">
    <source>
    </source>
</evidence>
<evidence type="ECO:0000269" key="23">
    <source>
    </source>
</evidence>
<evidence type="ECO:0000269" key="24">
    <source>
    </source>
</evidence>
<evidence type="ECO:0000269" key="25">
    <source>
    </source>
</evidence>
<evidence type="ECO:0000269" key="26">
    <source>
    </source>
</evidence>
<evidence type="ECO:0000269" key="27">
    <source>
    </source>
</evidence>
<evidence type="ECO:0000269" key="28">
    <source>
    </source>
</evidence>
<evidence type="ECO:0000269" key="29">
    <source>
    </source>
</evidence>
<evidence type="ECO:0000269" key="30">
    <source>
    </source>
</evidence>
<evidence type="ECO:0000269" key="31">
    <source>
    </source>
</evidence>
<evidence type="ECO:0000269" key="32">
    <source>
    </source>
</evidence>
<evidence type="ECO:0000269" key="33">
    <source>
    </source>
</evidence>
<evidence type="ECO:0000269" key="34">
    <source ref="7"/>
</evidence>
<evidence type="ECO:0000303" key="35">
    <source>
    </source>
</evidence>
<evidence type="ECO:0000305" key="36"/>
<evidence type="ECO:0000305" key="37">
    <source>
    </source>
</evidence>
<evidence type="ECO:0007744" key="38">
    <source>
        <dbReference type="PDB" id="3ASW"/>
    </source>
</evidence>
<evidence type="ECO:0007744" key="39">
    <source>
        <dbReference type="PDB" id="4F1Z"/>
    </source>
</evidence>
<evidence type="ECO:0007744" key="40">
    <source>
        <dbReference type="PDB" id="4ZRY"/>
    </source>
</evidence>
<evidence type="ECO:0007744" key="41">
    <source>
    </source>
</evidence>
<evidence type="ECO:0007744" key="42">
    <source>
    </source>
</evidence>
<evidence type="ECO:0007829" key="43">
    <source>
        <dbReference type="PDB" id="3ASW"/>
    </source>
</evidence>
<evidence type="ECO:0007829" key="44">
    <source>
        <dbReference type="PDB" id="4F1Z"/>
    </source>
</evidence>
<evidence type="ECO:0007829" key="45">
    <source>
        <dbReference type="PDB" id="6E2J"/>
    </source>
</evidence>
<evidence type="ECO:0007829" key="46">
    <source>
        <dbReference type="PDB" id="6UUI"/>
    </source>
</evidence>
<keyword id="KW-0002">3D-structure</keyword>
<keyword id="KW-0175">Coiled coil</keyword>
<keyword id="KW-0963">Cytoplasm</keyword>
<keyword id="KW-0903">Direct protein sequencing</keyword>
<keyword id="KW-0225">Disease variant</keyword>
<keyword id="KW-1015">Disulfide bond</keyword>
<keyword id="KW-0977">Ichthyosis</keyword>
<keyword id="KW-0403">Intermediate filament</keyword>
<keyword id="KW-0416">Keratin</keyword>
<keyword id="KW-0597">Phosphoprotein</keyword>
<keyword id="KW-1267">Proteomics identification</keyword>
<keyword id="KW-1185">Reference proteome</keyword>
<keyword id="KW-0964">Secreted</keyword>
<reference key="1">
    <citation type="journal article" date="1988" name="J. Biol. Chem.">
        <title>The complete sequence of the human intermediate filament chain keratin 10. Subdomainal divisions and model for folding of end domain sequences.</title>
        <authorList>
            <person name="Zhou X.M."/>
            <person name="Idler W.W."/>
            <person name="Steven A.C."/>
            <person name="Roop D.R."/>
            <person name="Steinert P.M."/>
        </authorList>
    </citation>
    <scope>NUCLEOTIDE SEQUENCE [MRNA]</scope>
    <scope>VARIANTS SER-101 AND TYR-487</scope>
    <source>
        <tissue>Foreskin</tissue>
    </source>
</reference>
<reference key="2">
    <citation type="journal article" date="1988" name="J. Mol. Biol.">
        <title>Identification of an orthologous mammalian cytokeratin gene. High degree of intron sequence conservation during evolution of human cytokeratin 10.</title>
        <authorList>
            <person name="Rieger M."/>
            <person name="Franke W.W."/>
        </authorList>
    </citation>
    <scope>NUCLEOTIDE SEQUENCE [GENOMIC DNA]</scope>
    <scope>VARIANT TYR-487</scope>
</reference>
<reference key="3">
    <citation type="journal article" date="2006" name="Nature">
        <title>DNA sequence of human chromosome 17 and analysis of rearrangement in the human lineage.</title>
        <authorList>
            <person name="Zody M.C."/>
            <person name="Garber M."/>
            <person name="Adams D.J."/>
            <person name="Sharpe T."/>
            <person name="Harrow J."/>
            <person name="Lupski J.R."/>
            <person name="Nicholson C."/>
            <person name="Searle S.M."/>
            <person name="Wilming L."/>
            <person name="Young S.K."/>
            <person name="Abouelleil A."/>
            <person name="Allen N.R."/>
            <person name="Bi W."/>
            <person name="Bloom T."/>
            <person name="Borowsky M.L."/>
            <person name="Bugalter B.E."/>
            <person name="Butler J."/>
            <person name="Chang J.L."/>
            <person name="Chen C.-K."/>
            <person name="Cook A."/>
            <person name="Corum B."/>
            <person name="Cuomo C.A."/>
            <person name="de Jong P.J."/>
            <person name="DeCaprio D."/>
            <person name="Dewar K."/>
            <person name="FitzGerald M."/>
            <person name="Gilbert J."/>
            <person name="Gibson R."/>
            <person name="Gnerre S."/>
            <person name="Goldstein S."/>
            <person name="Grafham D.V."/>
            <person name="Grocock R."/>
            <person name="Hafez N."/>
            <person name="Hagopian D.S."/>
            <person name="Hart E."/>
            <person name="Norman C.H."/>
            <person name="Humphray S."/>
            <person name="Jaffe D.B."/>
            <person name="Jones M."/>
            <person name="Kamal M."/>
            <person name="Khodiyar V.K."/>
            <person name="LaButti K."/>
            <person name="Laird G."/>
            <person name="Lehoczky J."/>
            <person name="Liu X."/>
            <person name="Lokyitsang T."/>
            <person name="Loveland J."/>
            <person name="Lui A."/>
            <person name="Macdonald P."/>
            <person name="Major J.E."/>
            <person name="Matthews L."/>
            <person name="Mauceli E."/>
            <person name="McCarroll S.A."/>
            <person name="Mihalev A.H."/>
            <person name="Mudge J."/>
            <person name="Nguyen C."/>
            <person name="Nicol R."/>
            <person name="O'Leary S.B."/>
            <person name="Osoegawa K."/>
            <person name="Schwartz D.C."/>
            <person name="Shaw-Smith C."/>
            <person name="Stankiewicz P."/>
            <person name="Steward C."/>
            <person name="Swarbreck D."/>
            <person name="Venkataraman V."/>
            <person name="Whittaker C.A."/>
            <person name="Yang X."/>
            <person name="Zimmer A.R."/>
            <person name="Bradley A."/>
            <person name="Hubbard T."/>
            <person name="Birren B.W."/>
            <person name="Rogers J."/>
            <person name="Lander E.S."/>
            <person name="Nusbaum C."/>
        </authorList>
    </citation>
    <scope>NUCLEOTIDE SEQUENCE [LARGE SCALE GENOMIC DNA]</scope>
</reference>
<reference key="4">
    <citation type="journal article" date="2004" name="Genome Res.">
        <title>The status, quality, and expansion of the NIH full-length cDNA project: the Mammalian Gene Collection (MGC).</title>
        <authorList>
            <consortium name="The MGC Project Team"/>
        </authorList>
    </citation>
    <scope>NUCLEOTIDE SEQUENCE [LARGE SCALE MRNA]</scope>
    <scope>VARIANTS SER-101 AND TYR-487</scope>
    <source>
        <tissue>Skin</tissue>
    </source>
</reference>
<reference key="5">
    <citation type="journal article" date="1987" name="Mol. Biol. Rep.">
        <title>Sequence of a cDNA encoding human keratin No 10 selected according to structural homologies of keratins and their tissue-specific expression.</title>
        <authorList>
            <person name="Darmon M.Y."/>
            <person name="Semat A."/>
            <person name="Darmon M.C."/>
            <person name="Vasseur M."/>
        </authorList>
    </citation>
    <scope>NUCLEOTIDE SEQUENCE [MRNA] OF 130-584</scope>
    <scope>VARIANT TYR-487</scope>
</reference>
<reference key="6">
    <citation type="journal article" date="1994" name="J. Invest. Dermatol.">
        <title>Prenatal diagnosis of epidermolytic hyperkeratosis by direct gene sequencing.</title>
        <authorList>
            <person name="Rothnagel J.A."/>
            <person name="Longley M.A."/>
            <person name="Holder R.A."/>
            <person name="Kuster W."/>
            <person name="Roop D.R."/>
        </authorList>
    </citation>
    <scope>NUCLEOTIDE SEQUENCE [GENOMIC DNA] OF 147-161</scope>
    <scope>VARIANTS EHK2A HIS-156 AND ASN-160</scope>
</reference>
<reference key="7">
    <citation type="submission" date="1993-06" db="EMBL/GenBank/DDBJ databases">
        <title>Identification of mutational hot spots in the suprabasal keratin genes from patients with epidermolytic hyperkeratosis.</title>
        <authorList>
            <person name="Rothnagel J.J."/>
            <person name="Dominey A."/>
            <person name="Fisher M."/>
            <person name="Axtell S."/>
            <person name="Pittelkow M."/>
            <person name="Anton-Lamprecht I."/>
            <person name="Hohl D."/>
            <person name="Roop D."/>
        </authorList>
    </citation>
    <scope>NUCLEOTIDE SEQUENCE [GENOMIC DNA] OF 147-161</scope>
    <scope>VARIANT EHK2A CYS-156</scope>
</reference>
<reference key="8">
    <citation type="journal article" date="1992" name="Gene">
        <title>Exons I and VII of the gene (Ker10) encoding human keratin 10 undergo structural rearrangements within repeats.</title>
        <authorList>
            <person name="Tkachenko A.V."/>
            <person name="Buchman V.L."/>
            <person name="Bliskovsky V.V."/>
            <person name="Shvets Y.P."/>
            <person name="Kisselev L.L."/>
        </authorList>
    </citation>
    <scope>NUCLEOTIDE SEQUENCE [MRNA] OF 197-584</scope>
</reference>
<reference key="9">
    <citation type="journal article" date="1992" name="Electrophoresis">
        <title>Microsequences of 145 proteins recorded in the two-dimensional gel protein database of normal human epidermal keratinocytes.</title>
        <authorList>
            <person name="Rasmussen H.H."/>
            <person name="van Damme J."/>
            <person name="Puype M."/>
            <person name="Gesser B."/>
            <person name="Celis J.E."/>
            <person name="Vandekerckhove J."/>
        </authorList>
    </citation>
    <scope>PROTEIN SEQUENCE OF 180-184 AND 568-580</scope>
    <source>
        <tissue>Keratinocyte</tissue>
    </source>
</reference>
<reference key="10">
    <citation type="journal article" date="1992" name="Cell">
        <title>The genetic basis of epidermolytic hyperkeratosis: a disorder of differentiation-specific epidermal keratin genes.</title>
        <authorList>
            <person name="Cheng J."/>
            <person name="Syder A.J."/>
            <person name="Yu Q.-C."/>
            <person name="Letai A."/>
            <person name="Paller A.S."/>
            <person name="Fuchs E."/>
        </authorList>
    </citation>
    <scope>INVOLVEMENT IN EHK2A</scope>
    <scope>VARIANT EHK2A HIS-156</scope>
</reference>
<reference key="11">
    <citation type="journal article" date="2002" name="Cell. Microbiol.">
        <title>Staphylococcus aureus clumping factor B (ClfB) promotes adherence to human type I cytokeratin 10: implications for nasal colonization.</title>
        <authorList>
            <person name="O'Brien L.M."/>
            <person name="Walsh E.J."/>
            <person name="Massey R.C."/>
            <person name="Peacock S.J."/>
            <person name="Foster T.J."/>
        </authorList>
    </citation>
    <scope>INTERACTION WITH STAPHYLOCOCCUS AUREUS CLFB (MICROBIAL INFECTION)</scope>
    <scope>SUBCELLULAR LOCATION</scope>
    <scope>TISSUE SPECIFICITY</scope>
</reference>
<reference key="12">
    <citation type="journal article" date="2003" name="Nature">
        <title>Proteomic characterization of the human centrosome by protein correlation profiling.</title>
        <authorList>
            <person name="Andersen J.S."/>
            <person name="Wilkinson C.J."/>
            <person name="Mayor T."/>
            <person name="Mortensen P."/>
            <person name="Nigg E.A."/>
            <person name="Mann M."/>
        </authorList>
    </citation>
    <scope>IDENTIFICATION BY MASS SPECTROMETRY</scope>
    <source>
        <tissue>Lymphoblast</tissue>
    </source>
</reference>
<reference key="13">
    <citation type="journal article" date="2004" name="J. Biol. Chem.">
        <title>Clumping factor B, a fibrinogen-binding MSCRAMM (microbial surface components recognizing adhesive matrix molecules) adhesin of Staphylococcus aureus, also binds to the tail region of type I cytokeratin 10.</title>
        <authorList>
            <person name="Walsh E.J."/>
            <person name="O'Brien L.M."/>
            <person name="Liang X."/>
            <person name="Hoeoek M."/>
            <person name="Foster T.J."/>
        </authorList>
    </citation>
    <scope>FUNCTION (MICROBIAL INFECTION)</scope>
    <scope>INTERACTION WITH STAPHYLOCOCCUS AUREUS CLFB (MICROBIAL INFECTION)</scope>
</reference>
<reference key="14">
    <citation type="journal article" date="2008" name="Mol. Cell">
        <title>Kinase-selective enrichment enables quantitative phosphoproteomics of the kinome across the cell cycle.</title>
        <authorList>
            <person name="Daub H."/>
            <person name="Olsen J.V."/>
            <person name="Bairlein M."/>
            <person name="Gnad F."/>
            <person name="Oppermann F.S."/>
            <person name="Korner R."/>
            <person name="Greff Z."/>
            <person name="Keri G."/>
            <person name="Stemmann O."/>
            <person name="Mann M."/>
        </authorList>
    </citation>
    <scope>PHOSPHORYLATION [LARGE SCALE ANALYSIS] AT SER-16 AND SER-42</scope>
    <scope>IDENTIFICATION BY MASS SPECTROMETRY [LARGE SCALE ANALYSIS]</scope>
    <source>
        <tissue>Cervix carcinoma</tissue>
    </source>
</reference>
<reference key="15">
    <citation type="journal article" date="2009" name="J. Invest. Dermatol.">
        <title>Recessive epidermolytic hyperkeratosis caused by a previously unreported termination codon mutation in the keratin 10 gene.</title>
        <authorList>
            <person name="Terheyden P."/>
            <person name="Grimberg G."/>
            <person name="Hausser I."/>
            <person name="Rose C."/>
            <person name="Korge B.P."/>
            <person name="Krieg T."/>
            <person name="Arin M.J."/>
        </authorList>
    </citation>
    <scope>INVOLVEMENT IN EHK2B</scope>
</reference>
<reference key="16">
    <citation type="journal article" date="2009" name="Mol. Microbiol.">
        <title>The Streptococcus pneumoniae adhesin PsrP binds to keratin 10 on lung cells.</title>
        <authorList>
            <person name="Shivshankar P."/>
            <person name="Sanchez C."/>
            <person name="Rose L.F."/>
            <person name="Orihuela C.J."/>
        </authorList>
    </citation>
    <scope>FUNCTION (MICROBIAL INFECTION)</scope>
    <scope>INTERACTION WITH S.PNEUMONIAE PSRP (MICROBIAL INFECTION)</scope>
    <scope>SUBCELLULAR LOCATION</scope>
    <scope>TISSUE SPECIFICITY</scope>
</reference>
<reference key="17">
    <citation type="journal article" date="2010" name="Br. J. Dermatol.">
        <title>Lethal autosomal recessive epidermolytic ichthyosis due to a novel donor splice-site mutation in KRT10.</title>
        <authorList>
            <person name="Covaciu C."/>
            <person name="Castori M."/>
            <person name="De Luca N."/>
            <person name="Ghirri P."/>
            <person name="Nannipieri A."/>
            <person name="Ragone G."/>
            <person name="Zambruno G."/>
            <person name="Castiglia D."/>
        </authorList>
    </citation>
    <scope>INVOLVEMENT IN EHK2B</scope>
</reference>
<reference key="18">
    <citation type="journal article" date="2010" name="Science">
        <title>Mitotic recombination in patients with ichthyosis causes reversion of dominant mutations in KRT10.</title>
        <authorList>
            <person name="Choate K.A."/>
            <person name="Lu Y."/>
            <person name="Zhou J."/>
            <person name="Choi M."/>
            <person name="Elias P.M."/>
            <person name="Farhi A."/>
            <person name="Nelson-Williams C."/>
            <person name="Crumrine D."/>
            <person name="Williams M.L."/>
            <person name="Nopper A.J."/>
            <person name="Bree A."/>
            <person name="Milstone L.M."/>
            <person name="Lifton R.P."/>
        </authorList>
    </citation>
    <scope>INVOLVEMENT IN IWC</scope>
</reference>
<reference key="19">
    <citation type="journal article" date="2011" name="BMC Syst. Biol.">
        <title>Initial characterization of the human central proteome.</title>
        <authorList>
            <person name="Burkard T.R."/>
            <person name="Planyavsky M."/>
            <person name="Kaupe I."/>
            <person name="Breitwieser F.P."/>
            <person name="Buerckstuemmer T."/>
            <person name="Bennett K.L."/>
            <person name="Superti-Furga G."/>
            <person name="Colinge J."/>
        </authorList>
    </citation>
    <scope>IDENTIFICATION BY MASS SPECTROMETRY [LARGE SCALE ANALYSIS]</scope>
</reference>
<reference key="20">
    <citation type="journal article" date="2013" name="J. Proteome Res.">
        <title>Toward a comprehensive characterization of a human cancer cell phosphoproteome.</title>
        <authorList>
            <person name="Zhou H."/>
            <person name="Di Palma S."/>
            <person name="Preisinger C."/>
            <person name="Peng M."/>
            <person name="Polat A.N."/>
            <person name="Heck A.J."/>
            <person name="Mohammed S."/>
        </authorList>
    </citation>
    <scope>PHOSPHORYLATION [LARGE SCALE ANALYSIS] AT SER-14; SER-16; SER-42; SER-53; SER-56 AND SER-170</scope>
    <scope>IDENTIFICATION BY MASS SPECTROMETRY [LARGE SCALE ANALYSIS]</scope>
    <source>
        <tissue>Cervix carcinoma</tissue>
        <tissue>Erythroleukemia</tissue>
    </source>
</reference>
<reference key="21">
    <citation type="journal article" date="2014" name="J. Invest. Dermatol.">
        <title>Interaction of plectin with keratins 5 and 14: dependence on several plectin domains and keratin quaternary structure.</title>
        <authorList>
            <person name="Bouameur J.E."/>
            <person name="Favre B."/>
            <person name="Fontao L."/>
            <person name="Lingasamy P."/>
            <person name="Begre N."/>
            <person name="Borradori L."/>
        </authorList>
    </citation>
    <scope>IDENTIFICATION IN A COMPLEX WITH KRT1</scope>
    <scope>INTERACTION WITH KRT1 AND PLEC</scope>
</reference>
<reference key="22">
    <citation type="journal article" date="2014" name="Open Biol.">
        <title>The basic keratin 10-binding domain of the virulence-associated pneumococcal serine-rich protein PsrP adopts a novel MSCRAMM fold.</title>
        <authorList>
            <person name="Schulte T."/>
            <person name="Lofling J."/>
            <person name="Mikaelsson C."/>
            <person name="Kikhney A."/>
            <person name="Hentrich K."/>
            <person name="Diamante A."/>
            <person name="Ebel C."/>
            <person name="Normark S."/>
            <person name="Svergun D."/>
            <person name="Henriques-Normark B."/>
            <person name="Achour A."/>
        </authorList>
    </citation>
    <scope>INTERACTION WITH S.PNEUMONIAE PSRP (MICROBIAL INFECTION)</scope>
</reference>
<reference key="23">
    <citation type="journal article" date="2014" name="Open Biol.">
        <authorList>
            <person name="Schulte T."/>
            <person name="Lofling J."/>
            <person name="Mikaelsson C."/>
            <person name="Kikhney A."/>
            <person name="Hentrich K."/>
            <person name="Diamante A."/>
            <person name="Ebel C."/>
            <person name="Normark S."/>
            <person name="Svergun D."/>
            <person name="Henriques-Normark B."/>
            <person name="Achour A."/>
        </authorList>
    </citation>
    <scope>ERRATUM OF PUBMED:24430336</scope>
</reference>
<reference key="24">
    <citation type="journal article" date="2014" name="J. Proteomics">
        <title>An enzyme assisted RP-RPLC approach for in-depth analysis of human liver phosphoproteome.</title>
        <authorList>
            <person name="Bian Y."/>
            <person name="Song C."/>
            <person name="Cheng K."/>
            <person name="Dong M."/>
            <person name="Wang F."/>
            <person name="Huang J."/>
            <person name="Sun D."/>
            <person name="Wang L."/>
            <person name="Ye M."/>
            <person name="Zou H."/>
        </authorList>
    </citation>
    <scope>IDENTIFICATION BY MASS SPECTROMETRY [LARGE SCALE ANALYSIS]</scope>
    <source>
        <tissue>Liver</tissue>
    </source>
</reference>
<reference key="25">
    <citation type="journal article" date="2015" name="Proteomics">
        <title>N-terminome analysis of the human mitochondrial proteome.</title>
        <authorList>
            <person name="Vaca Jacome A.S."/>
            <person name="Rabilloud T."/>
            <person name="Schaeffer-Reiss C."/>
            <person name="Rompais M."/>
            <person name="Ayoub D."/>
            <person name="Lane L."/>
            <person name="Bairoch A."/>
            <person name="Van Dorsselaer A."/>
            <person name="Carapito C."/>
        </authorList>
    </citation>
    <scope>IDENTIFICATION BY MASS SPECTROMETRY [LARGE SCALE ANALYSIS]</scope>
</reference>
<reference key="26">
    <citation type="journal article" date="2020" name="Sci. Rep.">
        <title>Serum lipids, retinoic acid and phenol red differentially regulate expression of keratins K1, K10 and K2 in cultured keratinocytes.</title>
        <authorList>
            <person name="Aldehlawi H."/>
            <person name="Usman S."/>
            <person name="Lalli A."/>
            <person name="Ahmad F."/>
            <person name="Williams G."/>
            <person name="Teh M.T."/>
            <person name="Waseem A."/>
        </authorList>
    </citation>
    <scope>SUBCELLULAR LOCATION</scope>
    <scope>INDUCTION BY ATRA</scope>
</reference>
<reference evidence="38" key="27">
    <citation type="submission" date="2010-12" db="PDB data bank">
        <title>Structural and biochemical characterization of ClfB:ligand interactions.</title>
        <authorList>
            <person name="Ganesh V.K."/>
            <person name="Barbu E.M."/>
            <person name="Deivanayagam C.C.S."/>
            <person name="Le B."/>
            <person name="Anderson A."/>
            <person name="Matsuka Y."/>
            <person name="Lin S.L."/>
            <person name="Foster T.J."/>
            <person name="Narayana S.L."/>
            <person name="Hook M."/>
        </authorList>
    </citation>
    <scope>X-RAY CRYSTALLOGRAPHY (2.60 ANGSTROMS) OF 473-487 IN COMPLEX WITH STAPHYLOCOCCUS AUREUS CLFB</scope>
</reference>
<reference evidence="39" key="28">
    <citation type="journal article" date="2012" name="PLoS Pathog.">
        <title>Crystal structures reveal the multi-ligand binding mechanism of Staphylococcus aureus ClfB.</title>
        <authorList>
            <person name="Xiang H."/>
            <person name="Feng Y."/>
            <person name="Wang J."/>
            <person name="Liu B."/>
            <person name="Chen Y."/>
            <person name="Liu L."/>
            <person name="Deng X."/>
            <person name="Yang M."/>
        </authorList>
    </citation>
    <scope>X-RAY CRYSTALLOGRAPHY (2.30 ANGSTROMS) OF 499-512 IN COMPLEX WITH STAPHYLOCOCCUS AUREUS CLFB</scope>
    <scope>INTERACTION WITH STAPHYLOCOCCUS AUREUS CLFB</scope>
</reference>
<reference evidence="40" key="29">
    <citation type="journal article" date="2017" name="J. Invest. Dermatol.">
        <title>The X-Ray Crystal Structure of the Keratin1-Keratin 10 Helix 2B Heterodimer Reveals Molecular Surface Properties and Biochemical Insights into Human Skin Disease.</title>
        <authorList>
            <person name="Bunick C.G."/>
            <person name="Milstone L.M."/>
        </authorList>
    </citation>
    <scope>X-RAY CRYSTALLOGRAPHY (3.30 ANGSTROMS) OF 337-456 IN COMPLEX WITH KRT1</scope>
    <scope>SUBUNIT</scope>
    <scope>DISULFIDE BONDS</scope>
</reference>
<reference key="30">
    <citation type="journal article" date="1992" name="Proc. Natl. Acad. Sci. U.S.A.">
        <title>Extensive size polymorphism of the human keratin 10 chain resides in the C-terminal V2 subdomain due to variable numbers and sizes of glycine loops.</title>
        <authorList>
            <person name="Korge B.P."/>
            <person name="Gan S.-Q."/>
            <person name="McBridge O.W."/>
            <person name="Mischke D."/>
            <person name="Steinert P.M."/>
        </authorList>
    </citation>
    <scope>VARIANTS</scope>
</reference>
<reference key="31">
    <citation type="journal article" date="1992" name="Science">
        <title>Mutations in the rod domains of keratins 1 and 10 in epidermolytic hyperkeratosis.</title>
        <authorList>
            <person name="Rothnagel J.A."/>
            <person name="Dominey A.M."/>
            <person name="Dempsey L.D."/>
            <person name="Longley M.A."/>
            <person name="Greenhalgh D.A."/>
            <person name="Gagne T.A."/>
            <person name="Huber M."/>
            <person name="Frenk E."/>
            <person name="Hohl D."/>
            <person name="Roop D.R."/>
        </authorList>
    </citation>
    <scope>VARIANTS EHK2A HIS-156 AND SER-161</scope>
    <scope>INVOLVEMENT IN EHK2A</scope>
</reference>
<reference key="32">
    <citation type="journal article" date="1993" name="Hum. Mol. Genet.">
        <title>A mutational hot spot in keratin 10 (KRT 10) in patients with epidermolytic hyperkeratosis.</title>
        <authorList>
            <person name="Rothnagel J.A."/>
            <person name="Fisher M.P."/>
            <person name="Axtell S.M."/>
            <person name="Pittelkow M.R."/>
            <person name="Anton-Lamprecht I."/>
            <person name="Huber M."/>
            <person name="Hohl D."/>
            <person name="Roop D.R."/>
        </authorList>
    </citation>
    <scope>VARIANTS EHK2A CYS-156 AND LEU-156</scope>
    <scope>INVOLVEMENT IN EHK2A</scope>
</reference>
<reference key="33">
    <citation type="journal article" date="1994" name="Am. J. Hum. Genet.">
        <title>Preferential sites in keratin 10 that are mutated in epidermolytic hyperkeratosis.</title>
        <authorList>
            <person name="Chipev C.C."/>
            <person name="Yang J.-M."/>
            <person name="Digiovanna J.J."/>
            <person name="Steinert P.M."/>
            <person name="Marekov L."/>
            <person name="Compton J.G."/>
            <person name="Bale S.J."/>
        </authorList>
    </citation>
    <scope>VARIANTS EHK2A HIS-154; CYS-156; HIS-156; ASP-160 AND GLN-442</scope>
    <scope>INVOLVEMENT IN EHK2A</scope>
</reference>
<reference key="34">
    <citation type="journal article" date="1994" name="J. Clin. Invest.">
        <title>Genetic mutations in the K1 and K10 genes of patients with epidermolytic hyperkeratosis. Correlation between location and disease severity.</title>
        <authorList>
            <person name="Syder A.J."/>
            <person name="Yu Q.-C."/>
            <person name="Paller A.S."/>
            <person name="Giudice G."/>
            <person name="Pearson R."/>
            <person name="Fuchs E."/>
        </authorList>
    </citation>
    <scope>VARIANTS EHK2A ARG-150; CYS-156 AND GLU-439</scope>
    <scope>VARIANT SER-126</scope>
    <scope>INVOLVEMENT IN EHK2A</scope>
</reference>
<reference key="35">
    <citation type="journal article" date="1994" name="J. Invest. Dermatol.">
        <title>Mutations in the rod 1A domain of keratins 1 and 10 in bullous congenital ichthyosiform erythroderma (BCIE).</title>
        <authorList>
            <person name="McLean W.H.I."/>
            <person name="Eady R.A.J."/>
            <person name="Dopping-Hepenstal P.J.C."/>
            <person name="McMillan J.R."/>
            <person name="Leigh I.M."/>
            <person name="Navsaria H.A."/>
            <person name="Higgins C."/>
            <person name="Harper J.I."/>
            <person name="Paige D.G."/>
            <person name="Morley S.M."/>
        </authorList>
    </citation>
    <scope>VARIANTS EHK2A PRO-156 AND SER-156</scope>
</reference>
<reference key="36">
    <citation type="journal article" date="1994" name="N. Engl. J. Med.">
        <title>Genetic and clinical mosaicism in a type of epidermal nevus.</title>
        <authorList>
            <person name="Paller A.S."/>
            <person name="Syder A.J."/>
            <person name="Chan Y.-M."/>
            <person name="Yu Q.-C."/>
            <person name="Hutton M.E."/>
            <person name="Tadini G."/>
            <person name="Fuchs E."/>
        </authorList>
    </citation>
    <scope>VARIANT EHK2A THR-150</scope>
    <scope>INVOLVEMENT IN EHK2A</scope>
</reference>
<reference key="37">
    <citation type="journal article" date="1997" name="J. Invest. Dermatol.">
        <title>A novel dinucleotide mutation in keratin 10 in the annular epidermolytic ichthyosis variant of bullous congenital ichthyosiform erythroderma.</title>
        <authorList>
            <person name="Joh G.-Y."/>
            <person name="Traupe H."/>
            <person name="Metze D."/>
            <person name="Nashan D."/>
            <person name="Huber M."/>
            <person name="Hohl D."/>
            <person name="Longley M.A."/>
            <person name="Rothnagel J.A."/>
            <person name="Roop D.R."/>
        </authorList>
    </citation>
    <scope>VARIANT AEI1 GLU-422</scope>
</reference>
<reference key="38">
    <citation type="journal article" date="1998" name="J. Invest. Dermatol.">
        <title>A novel helix termination mutation in keratin 10 in annular epidermolytic ichthyosis, a variant of bullous congenital ichthyosiform erythroderma.</title>
        <authorList>
            <person name="Suga Y."/>
            <person name="Duncan K.O."/>
            <person name="Heald P.W."/>
            <person name="Roop D.R."/>
        </authorList>
    </citation>
    <scope>VARIANT AEI1 THR-446</scope>
</reference>
<reference key="39">
    <citation type="journal article" date="1999" name="J. Invest. Dermatol.">
        <title>A novel substitution in keratin 10 in epidermolytic hyperkeratosis.</title>
        <authorList>
            <person name="Arin M.J."/>
            <person name="Longley M.A."/>
            <person name="Anton-Lamprecht I."/>
            <person name="Kurze G."/>
            <person name="Huber M."/>
            <person name="Hohl D."/>
            <person name="Rothnagel J.A."/>
            <person name="Roop D.R."/>
        </authorList>
    </citation>
    <scope>VARIANT EHK2A SER-160</scope>
</reference>
<reference key="40">
    <citation type="journal article" date="2006" name="Hum. Mol. Genet.">
        <title>A human keratin 10 knockout causes recessive epidermolytic hyperkeratosis.</title>
        <authorList>
            <person name="Mueller F.B."/>
            <person name="Huber M."/>
            <person name="Kinaciyan T."/>
            <person name="Hausser I."/>
            <person name="Schaffrath C."/>
            <person name="Krieg T."/>
            <person name="Hohl D."/>
            <person name="Korge B.P."/>
            <person name="Arin M.J."/>
        </authorList>
    </citation>
    <scope>VARIANT EHK2B 434-GLN--TYR-584 DEL</scope>
    <scope>INVOLVEMENT IN EHK2B</scope>
</reference>
<reference key="41">
    <citation type="journal article" date="2008" name="J. Invest. Dermatol.">
        <title>Mild recessive bullous congenital ichthyosiform erythroderma due to a previously unidentified homozygous keratin 10 nonsense mutation.</title>
        <authorList>
            <person name="Tsubota A."/>
            <person name="Akiyama M."/>
            <person name="Kanitakis J."/>
            <person name="Sakai K."/>
            <person name="Nomura T."/>
            <person name="Claudy A."/>
            <person name="Shimizu H."/>
        </authorList>
    </citation>
    <scope>VARIANT EHK2B 427-CYS--TYR-584 DEL</scope>
    <scope>INVOLVEMENT IN EHK2B</scope>
</reference>
<reference key="42">
    <citation type="journal article" date="2011" name="Br. J. Dermatol.">
        <title>Expanding the keratin mutation database: novel and recurrent mutations and genotype-phenotype correlations in 28 patients with epidermolytic ichthyosis.</title>
        <authorList>
            <person name="Arin M.J."/>
            <person name="Oji V."/>
            <person name="Emmert S."/>
            <person name="Hausser I."/>
            <person name="Traupe H."/>
            <person name="Krieg T."/>
            <person name="Grimberg G."/>
        </authorList>
    </citation>
    <scope>VARIANTS EHK2A ARG-150; THR-150; CYS-156; HIS-156 AND CYS-449</scope>
</reference>
<reference key="43">
    <citation type="journal article" date="2016" name="Eur. J. Dermatol.">
        <title>Ichthyosis hystrix Lambert type and Curth-Macklin type are a single entity with affected (KRT1 mutation) or unaffected (KRT10 mutation) palms and soles?</title>
        <authorList>
            <person name="Wang W.H."/>
            <person name="Zhang L."/>
            <person name="Li L.F."/>
            <person name="Sun T.T."/>
        </authorList>
    </citation>
    <scope>INVOLVEMENT IN IHL</scope>
    <scope>VARIANT IHL PRO-435</scope>
</reference>
<accession>P13645</accession>
<accession>Q14664</accession>
<accession>Q8N175</accession>
<dbReference type="EMBL" id="J04029">
    <property type="protein sequence ID" value="AAA60544.1"/>
    <property type="molecule type" value="mRNA"/>
</dbReference>
<dbReference type="EMBL" id="X14487">
    <property type="protein sequence ID" value="CAA32649.1"/>
    <property type="molecule type" value="Genomic_DNA"/>
</dbReference>
<dbReference type="EMBL" id="AC090283">
    <property type="status" value="NOT_ANNOTATED_CDS"/>
    <property type="molecule type" value="mRNA"/>
</dbReference>
<dbReference type="EMBL" id="BC034697">
    <property type="protein sequence ID" value="AAH34697.1"/>
    <property type="molecule type" value="mRNA"/>
</dbReference>
<dbReference type="EMBL" id="M19156">
    <property type="protein sequence ID" value="AAA59468.1"/>
    <property type="status" value="ALT_INIT"/>
    <property type="molecule type" value="mRNA"/>
</dbReference>
<dbReference type="EMBL" id="L20218">
    <property type="protein sequence ID" value="AAB59438.1"/>
    <property type="molecule type" value="Genomic_DNA"/>
</dbReference>
<dbReference type="EMBL" id="L20219">
    <property type="protein sequence ID" value="AAB59439.1"/>
    <property type="molecule type" value="Genomic_DNA"/>
</dbReference>
<dbReference type="EMBL" id="M77663">
    <property type="protein sequence ID" value="AAA59199.1"/>
    <property type="molecule type" value="mRNA"/>
</dbReference>
<dbReference type="CCDS" id="CCDS11377.1"/>
<dbReference type="PIR" id="A31994">
    <property type="entry name" value="A31994"/>
</dbReference>
<dbReference type="PIR" id="S02158">
    <property type="entry name" value="KRHU0"/>
</dbReference>
<dbReference type="RefSeq" id="NP_000412.3">
    <property type="nucleotide sequence ID" value="NM_000421.3"/>
</dbReference>
<dbReference type="PDB" id="3ASW">
    <property type="method" value="X-ray"/>
    <property type="resolution" value="2.60 A"/>
    <property type="chains" value="B=473-487"/>
</dbReference>
<dbReference type="PDB" id="4F1Z">
    <property type="method" value="X-ray"/>
    <property type="resolution" value="2.30 A"/>
    <property type="chains" value="Q=499-512"/>
</dbReference>
<dbReference type="PDB" id="4ZRY">
    <property type="method" value="X-ray"/>
    <property type="resolution" value="3.30 A"/>
    <property type="chains" value="A=337-456"/>
</dbReference>
<dbReference type="PDB" id="6E2J">
    <property type="method" value="X-ray"/>
    <property type="resolution" value="2.39 A"/>
    <property type="chains" value="B=195-296"/>
</dbReference>
<dbReference type="PDB" id="6EC0">
    <property type="method" value="X-ray"/>
    <property type="resolution" value="2.98 A"/>
    <property type="chains" value="B=195-296"/>
</dbReference>
<dbReference type="PDB" id="6UUI">
    <property type="method" value="X-ray"/>
    <property type="resolution" value="2.07 A"/>
    <property type="chains" value="X=337-456"/>
</dbReference>
<dbReference type="PDBsum" id="3ASW"/>
<dbReference type="PDBsum" id="4F1Z"/>
<dbReference type="PDBsum" id="4ZRY"/>
<dbReference type="PDBsum" id="6E2J"/>
<dbReference type="PDBsum" id="6EC0"/>
<dbReference type="PDBsum" id="6UUI"/>
<dbReference type="SMR" id="P13645"/>
<dbReference type="BioGRID" id="110056">
    <property type="interactions" value="199"/>
</dbReference>
<dbReference type="ComplexPortal" id="CPX-5662">
    <property type="entry name" value="Keratin-1 - Keratin-10 dimer complex"/>
</dbReference>
<dbReference type="CORUM" id="P13645"/>
<dbReference type="FunCoup" id="P13645">
    <property type="interactions" value="429"/>
</dbReference>
<dbReference type="IntAct" id="P13645">
    <property type="interactions" value="47"/>
</dbReference>
<dbReference type="MINT" id="P13645"/>
<dbReference type="STRING" id="9606.ENSP00000269576"/>
<dbReference type="DrugBank" id="DB09130">
    <property type="generic name" value="Copper"/>
</dbReference>
<dbReference type="DrugBank" id="DB01593">
    <property type="generic name" value="Zinc"/>
</dbReference>
<dbReference type="DrugBank" id="DB14487">
    <property type="generic name" value="Zinc acetate"/>
</dbReference>
<dbReference type="GlyCosmos" id="P13645">
    <property type="glycosylation" value="2 sites, 1 glycan"/>
</dbReference>
<dbReference type="GlyGen" id="P13645">
    <property type="glycosylation" value="5 sites, 2 O-linked glycans (5 sites)"/>
</dbReference>
<dbReference type="iPTMnet" id="P13645"/>
<dbReference type="PhosphoSitePlus" id="P13645"/>
<dbReference type="SwissPalm" id="P13645"/>
<dbReference type="BioMuta" id="KRT10"/>
<dbReference type="DMDM" id="269849769"/>
<dbReference type="REPRODUCTION-2DPAGE" id="P13645"/>
<dbReference type="CPTAC" id="CPTAC-5854"/>
<dbReference type="CPTAC" id="CPTAC-5879"/>
<dbReference type="CPTAC" id="non-CPTAC-2680"/>
<dbReference type="jPOST" id="P13645"/>
<dbReference type="MassIVE" id="P13645"/>
<dbReference type="PaxDb" id="9606-ENSP00000269576"/>
<dbReference type="PeptideAtlas" id="P13645"/>
<dbReference type="PRIDE" id="P13645"/>
<dbReference type="ProteomicsDB" id="52950"/>
<dbReference type="TopDownProteomics" id="P13645"/>
<dbReference type="Antibodypedia" id="1606">
    <property type="antibodies" value="1596 antibodies from 45 providers"/>
</dbReference>
<dbReference type="DNASU" id="3858"/>
<dbReference type="Ensembl" id="ENST00000269576.6">
    <property type="protein sequence ID" value="ENSP00000269576.5"/>
    <property type="gene ID" value="ENSG00000186395.9"/>
</dbReference>
<dbReference type="GeneID" id="3858"/>
<dbReference type="KEGG" id="hsa:3858"/>
<dbReference type="MANE-Select" id="ENST00000269576.6">
    <property type="protein sequence ID" value="ENSP00000269576.5"/>
    <property type="RefSeq nucleotide sequence ID" value="NM_000421.5"/>
    <property type="RefSeq protein sequence ID" value="NP_000412.4"/>
</dbReference>
<dbReference type="UCSC" id="uc002hvi.4">
    <property type="organism name" value="human"/>
</dbReference>
<dbReference type="AGR" id="HGNC:6413"/>
<dbReference type="CTD" id="3858"/>
<dbReference type="DisGeNET" id="3858"/>
<dbReference type="GeneCards" id="KRT10"/>
<dbReference type="HGNC" id="HGNC:6413">
    <property type="gene designation" value="KRT10"/>
</dbReference>
<dbReference type="HPA" id="ENSG00000186395">
    <property type="expression patterns" value="Tissue enriched (skin)"/>
</dbReference>
<dbReference type="MalaCards" id="KRT10"/>
<dbReference type="MIM" id="146600">
    <property type="type" value="phenotype"/>
</dbReference>
<dbReference type="MIM" id="148080">
    <property type="type" value="gene"/>
</dbReference>
<dbReference type="MIM" id="607602">
    <property type="type" value="phenotype"/>
</dbReference>
<dbReference type="MIM" id="609165">
    <property type="type" value="phenotype"/>
</dbReference>
<dbReference type="MIM" id="620150">
    <property type="type" value="phenotype"/>
</dbReference>
<dbReference type="MIM" id="620707">
    <property type="type" value="phenotype"/>
</dbReference>
<dbReference type="neXtProt" id="NX_P13645"/>
<dbReference type="OpenTargets" id="ENSG00000186395"/>
<dbReference type="Orphanet" id="281139">
    <property type="disease" value="Annular epidermolytic ichthyosis"/>
</dbReference>
<dbReference type="Orphanet" id="312">
    <property type="disease" value="Autosomal dominant epidermolytic ichthyosis"/>
</dbReference>
<dbReference type="Orphanet" id="512103">
    <property type="disease" value="Autosomal recessive epidermolytic ichthyosis"/>
</dbReference>
<dbReference type="Orphanet" id="281190">
    <property type="disease" value="Congenital reticular ichthyosiform erythroderma"/>
</dbReference>
<dbReference type="PharmGKB" id="PA30200"/>
<dbReference type="VEuPathDB" id="HostDB:ENSG00000186395"/>
<dbReference type="eggNOG" id="ENOG502QV0B">
    <property type="taxonomic scope" value="Eukaryota"/>
</dbReference>
<dbReference type="GeneTree" id="ENSGT00940000160849"/>
<dbReference type="HOGENOM" id="CLU_012560_8_3_1"/>
<dbReference type="InParanoid" id="P13645"/>
<dbReference type="OMA" id="QGQPRDY"/>
<dbReference type="OrthoDB" id="2441647at2759"/>
<dbReference type="PAN-GO" id="P13645">
    <property type="GO annotations" value="6 GO annotations based on evolutionary models"/>
</dbReference>
<dbReference type="PhylomeDB" id="P13645"/>
<dbReference type="TreeFam" id="TF332742"/>
<dbReference type="PathwayCommons" id="P13645"/>
<dbReference type="Reactome" id="R-HSA-6805567">
    <property type="pathway name" value="Keratinization"/>
</dbReference>
<dbReference type="Reactome" id="R-HSA-6809371">
    <property type="pathway name" value="Formation of the cornified envelope"/>
</dbReference>
<dbReference type="Reactome" id="R-HSA-9725554">
    <property type="pathway name" value="Differentiation of Keratinocytes in Interfollicular Epidermis in Mammalian Skin"/>
</dbReference>
<dbReference type="SignaLink" id="P13645"/>
<dbReference type="SIGNOR" id="P13645"/>
<dbReference type="BioGRID-ORCS" id="3858">
    <property type="hits" value="258 hits in 1164 CRISPR screens"/>
</dbReference>
<dbReference type="CD-CODE" id="91857CE7">
    <property type="entry name" value="Nucleolus"/>
</dbReference>
<dbReference type="ChiTaRS" id="KRT10">
    <property type="organism name" value="human"/>
</dbReference>
<dbReference type="EvolutionaryTrace" id="P13645"/>
<dbReference type="GeneWiki" id="Keratin_10"/>
<dbReference type="GenomeRNAi" id="3858"/>
<dbReference type="Pharos" id="P13645">
    <property type="development level" value="Tbio"/>
</dbReference>
<dbReference type="PRO" id="PR:P13645"/>
<dbReference type="Proteomes" id="UP000005640">
    <property type="component" value="Chromosome 17"/>
</dbReference>
<dbReference type="RNAct" id="P13645">
    <property type="molecule type" value="protein"/>
</dbReference>
<dbReference type="Bgee" id="ENSG00000186395">
    <property type="expression patterns" value="Expressed in upper leg skin and 207 other cell types or tissues"/>
</dbReference>
<dbReference type="ExpressionAtlas" id="P13645">
    <property type="expression patterns" value="baseline and differential"/>
</dbReference>
<dbReference type="GO" id="GO:0009986">
    <property type="term" value="C:cell surface"/>
    <property type="evidence" value="ECO:0007669"/>
    <property type="project" value="UniProtKB-SubCell"/>
</dbReference>
<dbReference type="GO" id="GO:0001533">
    <property type="term" value="C:cornified envelope"/>
    <property type="evidence" value="ECO:0000314"/>
    <property type="project" value="CAFA"/>
</dbReference>
<dbReference type="GO" id="GO:0005737">
    <property type="term" value="C:cytoplasm"/>
    <property type="evidence" value="ECO:0000314"/>
    <property type="project" value="UniProtKB"/>
</dbReference>
<dbReference type="GO" id="GO:0005856">
    <property type="term" value="C:cytoskeleton"/>
    <property type="evidence" value="ECO:0000318"/>
    <property type="project" value="GO_Central"/>
</dbReference>
<dbReference type="GO" id="GO:0005829">
    <property type="term" value="C:cytosol"/>
    <property type="evidence" value="ECO:0000304"/>
    <property type="project" value="Reactome"/>
</dbReference>
<dbReference type="GO" id="GO:0070062">
    <property type="term" value="C:extracellular exosome"/>
    <property type="evidence" value="ECO:0007005"/>
    <property type="project" value="UniProtKB"/>
</dbReference>
<dbReference type="GO" id="GO:0005615">
    <property type="term" value="C:extracellular space"/>
    <property type="evidence" value="ECO:0007005"/>
    <property type="project" value="UniProtKB"/>
</dbReference>
<dbReference type="GO" id="GO:0005882">
    <property type="term" value="C:intermediate filament"/>
    <property type="evidence" value="ECO:0000303"/>
    <property type="project" value="UniProtKB"/>
</dbReference>
<dbReference type="GO" id="GO:0045095">
    <property type="term" value="C:keratin filament"/>
    <property type="evidence" value="ECO:0000353"/>
    <property type="project" value="ComplexPortal"/>
</dbReference>
<dbReference type="GO" id="GO:0016020">
    <property type="term" value="C:membrane"/>
    <property type="evidence" value="ECO:0007005"/>
    <property type="project" value="UniProtKB"/>
</dbReference>
<dbReference type="GO" id="GO:0005634">
    <property type="term" value="C:nucleus"/>
    <property type="evidence" value="ECO:0007005"/>
    <property type="project" value="UniProtKB"/>
</dbReference>
<dbReference type="GO" id="GO:0046982">
    <property type="term" value="F:protein heterodimerization activity"/>
    <property type="evidence" value="ECO:0000314"/>
    <property type="project" value="UniProtKB"/>
</dbReference>
<dbReference type="GO" id="GO:0030280">
    <property type="term" value="F:structural constituent of skin epidermis"/>
    <property type="evidence" value="ECO:0000314"/>
    <property type="project" value="CAFA"/>
</dbReference>
<dbReference type="GO" id="GO:0008544">
    <property type="term" value="P:epidermis development"/>
    <property type="evidence" value="ECO:0000318"/>
    <property type="project" value="GO_Central"/>
</dbReference>
<dbReference type="GO" id="GO:0030855">
    <property type="term" value="P:epithelial cell differentiation"/>
    <property type="evidence" value="ECO:0000318"/>
    <property type="project" value="GO_Central"/>
</dbReference>
<dbReference type="GO" id="GO:0045109">
    <property type="term" value="P:intermediate filament organization"/>
    <property type="evidence" value="ECO:0000318"/>
    <property type="project" value="GO_Central"/>
</dbReference>
<dbReference type="GO" id="GO:0030216">
    <property type="term" value="P:keratinocyte differentiation"/>
    <property type="evidence" value="ECO:0000270"/>
    <property type="project" value="UniProtKB"/>
</dbReference>
<dbReference type="GO" id="GO:0018149">
    <property type="term" value="P:peptide cross-linking"/>
    <property type="evidence" value="ECO:0000314"/>
    <property type="project" value="CAFA"/>
</dbReference>
<dbReference type="GO" id="GO:0045684">
    <property type="term" value="P:positive regulation of epidermis development"/>
    <property type="evidence" value="ECO:0000250"/>
    <property type="project" value="UniProtKB"/>
</dbReference>
<dbReference type="GO" id="GO:0051290">
    <property type="term" value="P:protein heterotetramerization"/>
    <property type="evidence" value="ECO:0000314"/>
    <property type="project" value="UniProtKB"/>
</dbReference>
<dbReference type="FunFam" id="1.20.5.1160:FF:000002">
    <property type="entry name" value="Type I keratin 10"/>
    <property type="match status" value="1"/>
</dbReference>
<dbReference type="FunFam" id="1.20.5.170:FF:000002">
    <property type="entry name" value="Type I keratin KA11"/>
    <property type="match status" value="1"/>
</dbReference>
<dbReference type="FunFam" id="1.20.5.500:FF:000001">
    <property type="entry name" value="Type II keratin 23"/>
    <property type="match status" value="1"/>
</dbReference>
<dbReference type="Gene3D" id="1.20.5.170">
    <property type="match status" value="1"/>
</dbReference>
<dbReference type="Gene3D" id="1.20.5.500">
    <property type="entry name" value="Single helix bin"/>
    <property type="match status" value="1"/>
</dbReference>
<dbReference type="Gene3D" id="1.20.5.1160">
    <property type="entry name" value="Vasodilator-stimulated phosphoprotein"/>
    <property type="match status" value="1"/>
</dbReference>
<dbReference type="InterPro" id="IPR018039">
    <property type="entry name" value="IF_conserved"/>
</dbReference>
<dbReference type="InterPro" id="IPR039008">
    <property type="entry name" value="IF_rod_dom"/>
</dbReference>
<dbReference type="InterPro" id="IPR002957">
    <property type="entry name" value="Keratin_I"/>
</dbReference>
<dbReference type="PANTHER" id="PTHR23239">
    <property type="entry name" value="INTERMEDIATE FILAMENT"/>
    <property type="match status" value="1"/>
</dbReference>
<dbReference type="PANTHER" id="PTHR23239:SF137">
    <property type="entry name" value="KERATIN, TYPE I CYTOSKELETAL 10"/>
    <property type="match status" value="1"/>
</dbReference>
<dbReference type="Pfam" id="PF00038">
    <property type="entry name" value="Filament"/>
    <property type="match status" value="1"/>
</dbReference>
<dbReference type="PRINTS" id="PR01248">
    <property type="entry name" value="TYPE1KERATIN"/>
</dbReference>
<dbReference type="SMART" id="SM01391">
    <property type="entry name" value="Filament"/>
    <property type="match status" value="1"/>
</dbReference>
<dbReference type="SUPFAM" id="SSF64593">
    <property type="entry name" value="Intermediate filament protein, coiled coil region"/>
    <property type="match status" value="2"/>
</dbReference>
<dbReference type="SUPFAM" id="SSF46579">
    <property type="entry name" value="Prefoldin"/>
    <property type="match status" value="1"/>
</dbReference>
<dbReference type="PROSITE" id="PS00226">
    <property type="entry name" value="IF_ROD_1"/>
    <property type="match status" value="1"/>
</dbReference>
<dbReference type="PROSITE" id="PS51842">
    <property type="entry name" value="IF_ROD_2"/>
    <property type="match status" value="1"/>
</dbReference>